<protein>
    <recommendedName>
        <fullName>Non-specific lipid-transfer protein 1</fullName>
        <shortName>LTP 1</shortName>
    </recommendedName>
    <alternativeName>
        <fullName>Probable amylase/protease inhibitor</fullName>
    </alternativeName>
</protein>
<proteinExistence type="evidence at protein level"/>
<comment type="function">
    <text>Plant non-specific lipid-transfer proteins transfer phospholipids as well as galactolipids across membranes. May play a role in wax or cutin deposition in the cell walls of expanding epidermal cells and certain secretory tissues.</text>
</comment>
<comment type="tissue specificity">
    <text evidence="2">Aleurone layer of developing and germinating seeds.</text>
</comment>
<comment type="biotechnology">
    <text evidence="7">During brewing process, structural and chemical modifications of the protein occur. Both unfolding of the structure and glycation should increased the amphiphilicity of the protein, leading to foam-promoting forms that concentrate in beer foams.</text>
</comment>
<comment type="similarity">
    <text evidence="8">Belongs to the plant LTP family.</text>
</comment>
<comment type="caution">
    <text evidence="8">Was originally thought to be an inhibitor of alpha-amylase or of a protease and was known as PAPI: probable alpha-amylase/protease inhibitor.</text>
</comment>
<comment type="sequence caution" evidence="8">
    <conflict type="erroneous gene model prediction">
        <sequence resource="EMBL-CDS" id="CAA42832"/>
    </conflict>
</comment>
<comment type="online information" name="Protein Spotlight">
    <link uri="https://www.proteinspotlight.org/back_issues/048"/>
    <text>One beer please - Issue 48 of July 2004</text>
</comment>
<sequence length="117" mass="12301">MARAQVLLMAAALVLMLTAAPRAAVALNCGQVDSKMKPCLTYVQGGPGPSGECCNGVRDLHNQAQSSGDRQTVCNCLKGIARGIHNLNLNNAASIPSKCNVNVPYTISPDIDCSRIY</sequence>
<name>NLTP1_HORVU</name>
<dbReference type="EMBL" id="M15207">
    <property type="protein sequence ID" value="AAA32970.1"/>
    <property type="molecule type" value="mRNA"/>
</dbReference>
<dbReference type="EMBL" id="X05168">
    <property type="protein sequence ID" value="CAA28805.1"/>
    <property type="molecule type" value="mRNA"/>
</dbReference>
<dbReference type="EMBL" id="X59253">
    <property type="protein sequence ID" value="CAA41946.1"/>
    <property type="molecule type" value="Genomic_DNA"/>
</dbReference>
<dbReference type="EMBL" id="X60292">
    <property type="protein sequence ID" value="CAA42832.1"/>
    <property type="status" value="ALT_SEQ"/>
    <property type="molecule type" value="Genomic_DNA"/>
</dbReference>
<dbReference type="PIR" id="S20507">
    <property type="entry name" value="S20507"/>
</dbReference>
<dbReference type="PIR" id="T05947">
    <property type="entry name" value="T05947"/>
</dbReference>
<dbReference type="PDB" id="1BE2">
    <property type="method" value="NMR"/>
    <property type="chains" value="A=27-117"/>
</dbReference>
<dbReference type="PDB" id="1JTB">
    <property type="method" value="NMR"/>
    <property type="chains" value="A=27-117"/>
</dbReference>
<dbReference type="PDB" id="1LIP">
    <property type="method" value="NMR"/>
    <property type="chains" value="A=27-117"/>
</dbReference>
<dbReference type="PDB" id="1MID">
    <property type="method" value="X-ray"/>
    <property type="resolution" value="1.71 A"/>
    <property type="chains" value="A=27-117"/>
</dbReference>
<dbReference type="PDB" id="3GSH">
    <property type="method" value="X-ray"/>
    <property type="resolution" value="1.80 A"/>
    <property type="chains" value="A/B=27-117"/>
</dbReference>
<dbReference type="PDBsum" id="1BE2"/>
<dbReference type="PDBsum" id="1JTB"/>
<dbReference type="PDBsum" id="1LIP"/>
<dbReference type="PDBsum" id="1MID"/>
<dbReference type="PDBsum" id="3GSH"/>
<dbReference type="BMRB" id="P07597"/>
<dbReference type="SMR" id="P07597"/>
<dbReference type="EvolutionaryTrace" id="P07597"/>
<dbReference type="ExpressionAtlas" id="P07597">
    <property type="expression patterns" value="baseline and differential"/>
</dbReference>
<dbReference type="GO" id="GO:0008289">
    <property type="term" value="F:lipid binding"/>
    <property type="evidence" value="ECO:0007669"/>
    <property type="project" value="UniProtKB-KW"/>
</dbReference>
<dbReference type="GO" id="GO:0006869">
    <property type="term" value="P:lipid transport"/>
    <property type="evidence" value="ECO:0007669"/>
    <property type="project" value="InterPro"/>
</dbReference>
<dbReference type="CDD" id="cd01960">
    <property type="entry name" value="nsLTP1"/>
    <property type="match status" value="1"/>
</dbReference>
<dbReference type="Gene3D" id="1.10.110.10">
    <property type="entry name" value="Plant lipid-transfer and hydrophobic proteins"/>
    <property type="match status" value="1"/>
</dbReference>
<dbReference type="InterPro" id="IPR036312">
    <property type="entry name" value="Bifun_inhib/LTP/seed_sf"/>
</dbReference>
<dbReference type="InterPro" id="IPR016140">
    <property type="entry name" value="Bifunc_inhib/LTP/seed_store"/>
</dbReference>
<dbReference type="InterPro" id="IPR000528">
    <property type="entry name" value="Plant_nsLTP"/>
</dbReference>
<dbReference type="PANTHER" id="PTHR33076">
    <property type="entry name" value="NON-SPECIFIC LIPID-TRANSFER PROTEIN 2-RELATED"/>
    <property type="match status" value="1"/>
</dbReference>
<dbReference type="Pfam" id="PF00234">
    <property type="entry name" value="Tryp_alpha_amyl"/>
    <property type="match status" value="1"/>
</dbReference>
<dbReference type="PRINTS" id="PR00382">
    <property type="entry name" value="LIPIDTRNSFER"/>
</dbReference>
<dbReference type="SMART" id="SM00499">
    <property type="entry name" value="AAI"/>
    <property type="match status" value="1"/>
</dbReference>
<dbReference type="SUPFAM" id="SSF47699">
    <property type="entry name" value="Bifunctional inhibitor/lipid-transfer protein/seed storage 2S albumin"/>
    <property type="match status" value="1"/>
</dbReference>
<dbReference type="PROSITE" id="PS00597">
    <property type="entry name" value="PLANT_LTP"/>
    <property type="match status" value="1"/>
</dbReference>
<feature type="signal peptide" evidence="6">
    <location>
        <begin position="1"/>
        <end position="26"/>
    </location>
</feature>
<feature type="chain" id="PRO_0000018381" description="Non-specific lipid-transfer protein 1">
    <location>
        <begin position="27"/>
        <end position="117"/>
    </location>
</feature>
<feature type="lipid moiety-binding region" description="Cis-14-hydroxy-10,13-dioxo-7-heptadecenoic acid aspartate ester" evidence="1">
    <location>
        <position position="33"/>
    </location>
</feature>
<feature type="disulfide bond" evidence="3 4 5 9 10 11">
    <location>
        <begin position="29"/>
        <end position="76"/>
    </location>
</feature>
<feature type="disulfide bond" evidence="3 4 5 9 10 11">
    <location>
        <begin position="39"/>
        <end position="53"/>
    </location>
</feature>
<feature type="disulfide bond" evidence="3 4 5 9 10 11">
    <location>
        <begin position="54"/>
        <end position="99"/>
    </location>
</feature>
<feature type="disulfide bond" evidence="3 4 5 9 10 11">
    <location>
        <begin position="74"/>
        <end position="113"/>
    </location>
</feature>
<feature type="helix" evidence="13">
    <location>
        <begin position="29"/>
        <end position="36"/>
    </location>
</feature>
<feature type="helix" evidence="13">
    <location>
        <begin position="37"/>
        <end position="39"/>
    </location>
</feature>
<feature type="helix" evidence="13">
    <location>
        <begin position="40"/>
        <end position="43"/>
    </location>
</feature>
<feature type="helix" evidence="13">
    <location>
        <begin position="51"/>
        <end position="63"/>
    </location>
</feature>
<feature type="helix" evidence="13">
    <location>
        <begin position="67"/>
        <end position="82"/>
    </location>
</feature>
<feature type="strand" evidence="12">
    <location>
        <begin position="84"/>
        <end position="86"/>
    </location>
</feature>
<feature type="helix" evidence="13">
    <location>
        <begin position="89"/>
        <end position="98"/>
    </location>
</feature>
<feature type="strand" evidence="12">
    <location>
        <begin position="107"/>
        <end position="110"/>
    </location>
</feature>
<feature type="helix" evidence="13">
    <location>
        <begin position="113"/>
        <end position="115"/>
    </location>
</feature>
<gene>
    <name type="primary">LTP1</name>
    <name type="synonym">PAPI</name>
</gene>
<evidence type="ECO:0000269" key="1">
    <source>
    </source>
</evidence>
<evidence type="ECO:0000269" key="2">
    <source>
    </source>
</evidence>
<evidence type="ECO:0000269" key="3">
    <source>
    </source>
</evidence>
<evidence type="ECO:0000269" key="4">
    <source>
    </source>
</evidence>
<evidence type="ECO:0000269" key="5">
    <source>
    </source>
</evidence>
<evidence type="ECO:0000269" key="6">
    <source ref="4"/>
</evidence>
<evidence type="ECO:0000269" key="7">
    <source ref="7"/>
</evidence>
<evidence type="ECO:0000305" key="8"/>
<evidence type="ECO:0007744" key="9">
    <source>
        <dbReference type="PDB" id="1BE2"/>
    </source>
</evidence>
<evidence type="ECO:0007744" key="10">
    <source>
        <dbReference type="PDB" id="1JTB"/>
    </source>
</evidence>
<evidence type="ECO:0007744" key="11">
    <source>
        <dbReference type="PDB" id="1LIP"/>
    </source>
</evidence>
<evidence type="ECO:0007829" key="12">
    <source>
        <dbReference type="PDB" id="1LIP"/>
    </source>
</evidence>
<evidence type="ECO:0007829" key="13">
    <source>
        <dbReference type="PDB" id="1MID"/>
    </source>
</evidence>
<accession>P07597</accession>
<reference key="1">
    <citation type="journal article" date="1986" name="Planta">
        <title>Selective expression of a probable amylase/protease inhibitor in barley aleurone cells: comparison to the barley amylase/subtilisin inhibitor.</title>
        <authorList>
            <person name="Mundy J."/>
            <person name="Rogers J.C."/>
        </authorList>
    </citation>
    <scope>NUCLEOTIDE SEQUENCE</scope>
</reference>
<reference key="2">
    <citation type="journal article" date="1991" name="Plant Physiol.">
        <title>Promoter of a lipid transfer protein gene expressed in barley aleurone cells contains similar myb and myc recognition sites as the maize Bz-McC allele.</title>
        <authorList>
            <person name="Linnestad C."/>
            <person name="Loenneborg A."/>
            <person name="Kalla R."/>
            <person name="Olsen O.-A."/>
        </authorList>
    </citation>
    <scope>NUCLEOTIDE SEQUENCE</scope>
    <source>
        <strain>cv. Bomi</strain>
        <tissue>Seedling</tissue>
    </source>
</reference>
<reference key="3">
    <citation type="journal article" date="1992" name="Plant Mol. Biol.">
        <title>Structure and expression of the barley lipid transfer protein gene Ltp1.</title>
        <authorList>
            <person name="Skriver K."/>
            <person name="Leah R."/>
            <person name="Mueller-Uri F."/>
            <person name="Mundy J."/>
            <person name="Olsen F."/>
        </authorList>
    </citation>
    <scope>NUCLEOTIDE SEQUENCE [GENOMIC DNA]</scope>
    <scope>TISSUE SPECIFICITY</scope>
    <source>
        <tissue>Seed</tissue>
    </source>
</reference>
<reference key="4">
    <citation type="journal article" date="1986" name="Carlsberg Res. Commun.">
        <title>A 10kD barley seed protein homologous with an alpha-amylase inhibitor from Indian finger millet.</title>
        <authorList>
            <person name="Svensson B."/>
            <person name="Asano K."/>
            <person name="Jonassen I."/>
            <person name="Poulsen F.M."/>
            <person name="Mundy J."/>
            <person name="Svendsen I."/>
        </authorList>
    </citation>
    <scope>PROTEIN SEQUENCE OF 27-117</scope>
    <source>
        <strain>cv. Hiproly</strain>
    </source>
</reference>
<reference key="5">
    <citation type="journal article" date="1989" name="Arch. Biochem. Biophys.">
        <title>Coidentity of putative amylase inhibitors from barley and finger millet with phospholipid transfer proteins inferred from amino acid sequence homology.</title>
        <authorList>
            <person name="Bernhard W.R."/>
            <person name="Somerville C.R."/>
        </authorList>
    </citation>
    <scope>IDENTIFICATION AS A LTP</scope>
</reference>
<reference key="6">
    <citation type="journal article" date="2001" name="J. Biol. Chem.">
        <title>Barley lipid transfer protein, LTP1, contains a new type of lipid-like post-translational modification.</title>
        <authorList>
            <person name="Lindorff-Larsen K."/>
            <person name="Lerche M.H."/>
            <person name="Poulsen F.M."/>
            <person name="Roepstorff P."/>
            <person name="Winther J.R."/>
        </authorList>
    </citation>
    <scope>LIPIDATION AT ASP-33</scope>
    <source>
        <strain>cv. Optic</strain>
    </source>
</reference>
<reference key="7">
    <citation type="journal article" date="1993" name="Master Brew. Assoc. Am. Tech. Q.">
        <title>Barley lipid transfer protein 1 is involved in beer foam formation.</title>
        <authorList>
            <person name="Sorensen S.B."/>
            <person name="Bech L.M."/>
            <person name="Muldbjerg M."/>
            <person name="Beenfeldt T."/>
            <person name="Breddam K."/>
        </authorList>
        <dbReference type="AGRICOLA" id="IND20411110"/>
    </citation>
    <scope>BIOTECHNOLOGICAL RELEVANCE</scope>
</reference>
<reference key="8">
    <citation type="journal article" date="1996" name="Protein Sci.">
        <title>Structure in solution of a four-helix lipid binding protein.</title>
        <authorList>
            <person name="Heinemann B."/>
            <person name="Andersen K.V."/>
            <person name="Nielsen P.R."/>
            <person name="Bech L.M."/>
            <person name="Poulsen F.M."/>
        </authorList>
    </citation>
    <scope>STRUCTURE BY NMR OF 27-117</scope>
    <scope>DISULFIDE BONDS</scope>
</reference>
<reference key="9">
    <citation type="journal article" date="1997" name="Structure">
        <title>Barley lipid-transfer protein complexed with palmitoyl CoA: the structure reveals a hydrophobic binding site that can expand to fit both large and small lipid-like ligands.</title>
        <authorList>
            <person name="Lerche M.H."/>
            <person name="Kragelund B.B."/>
            <person name="Bech L.M."/>
            <person name="Poulsen F.M."/>
        </authorList>
    </citation>
    <scope>STRUCTURE BY NMR OF 27-117</scope>
    <scope>DISULFIDE BONDS</scope>
</reference>
<reference key="10">
    <citation type="journal article" date="1998" name="Protein Sci.">
        <title>Solution structure of barley lipid transfer protein complexed with palmitate. Two different binding modes of palmitate in the homologous maize and barley nonspecific lipid transfer proteins.</title>
        <authorList>
            <person name="Lerche M.H."/>
            <person name="Poulsen F.M."/>
        </authorList>
    </citation>
    <scope>STRUCTURE BY NMR OF 27-117</scope>
    <scope>DISULFIDE BONDS</scope>
</reference>
<organism>
    <name type="scientific">Hordeum vulgare</name>
    <name type="common">Barley</name>
    <dbReference type="NCBI Taxonomy" id="4513"/>
    <lineage>
        <taxon>Eukaryota</taxon>
        <taxon>Viridiplantae</taxon>
        <taxon>Streptophyta</taxon>
        <taxon>Embryophyta</taxon>
        <taxon>Tracheophyta</taxon>
        <taxon>Spermatophyta</taxon>
        <taxon>Magnoliopsida</taxon>
        <taxon>Liliopsida</taxon>
        <taxon>Poales</taxon>
        <taxon>Poaceae</taxon>
        <taxon>BOP clade</taxon>
        <taxon>Pooideae</taxon>
        <taxon>Triticodae</taxon>
        <taxon>Triticeae</taxon>
        <taxon>Hordeinae</taxon>
        <taxon>Hordeum</taxon>
    </lineage>
</organism>
<keyword id="KW-0002">3D-structure</keyword>
<keyword id="KW-0903">Direct protein sequencing</keyword>
<keyword id="KW-1015">Disulfide bond</keyword>
<keyword id="KW-0446">Lipid-binding</keyword>
<keyword id="KW-0449">Lipoprotein</keyword>
<keyword id="KW-0732">Signal</keyword>
<keyword id="KW-0813">Transport</keyword>